<name>NSP1_ROTAD</name>
<feature type="chain" id="PRO_0000369087" description="Non-structural protein 1">
    <location>
        <begin position="1"/>
        <end position="486"/>
    </location>
</feature>
<feature type="region of interest" description="RNA-binding" evidence="1">
    <location>
        <begin position="1"/>
        <end position="81"/>
    </location>
</feature>
<feature type="region of interest" description="Zinc-binding domain" evidence="1">
    <location>
        <begin position="42"/>
        <end position="79"/>
    </location>
</feature>
<feature type="region of interest" description="Important for cytoskeleton localization" evidence="1">
    <location>
        <begin position="82"/>
        <end position="176"/>
    </location>
</feature>
<feature type="region of interest" description="Interaction with host IRF3" evidence="1">
    <location>
        <begin position="317"/>
        <end position="486"/>
    </location>
</feature>
<feature type="short sequence motif" description="IKBKB-like degron (ILD) motif" evidence="1">
    <location>
        <begin position="479"/>
        <end position="483"/>
    </location>
</feature>
<feature type="short sequence motif" description="pLxIS motif" evidence="1">
    <location>
        <begin position="480"/>
        <end position="483"/>
    </location>
</feature>
<sequence>MATFKDTCYYYKRINKLNHAVLKLGVNDTWRPSPPTRYKGWCLDCCQHTDLTYCRGCTMYHVCQWCSQYGRCFLDSEPHLLRMRTFKNEVTKNDLMNLIDMYDTLFPINQRIVDKFMNSTRQHKCRNECITQWYNHLLMPITLQSLSIELDGDVYYVFGYYDSMSDINQTPFSFTNLIDMYDKLLLDNINFNRMSFLPVTLQQEYALRYFSKSRFISEKRKCVSDLHFSVNVIENLHNPSFKIQITRNCSDFSSDWNGVCKLVKDVSAYFNVLKTSHIEFYSISTRCRVFTQHKLKIASKHIKPNYVTSNHKTSATEVHNCKWCSINNSYTVWNDFRVKKIYDNIFNFLRALVKSNANVGHCSSQEKIYEYIKDVLDVCDDEKWKIAVTEIFNCLEPVELNNVKYALFNHEVNWDVINLLVQSVDKVPQILTLNDIVIIMKSIIYEWFDIRYMRNTPMTTFTVDKLRRLCTGVKTVDYDSGISDVE</sequence>
<reference key="1">
    <citation type="journal article" date="2008" name="J. Virol.">
        <title>Group A human rotavirus genomics: evidence that gene constellations are influenced by viral protein interactions.</title>
        <authorList>
            <person name="Heiman E.M."/>
            <person name="McDonald S.M."/>
            <person name="Barro M."/>
            <person name="Taraporewala Z.F."/>
            <person name="Bar-Magen T."/>
            <person name="Patton J.T."/>
        </authorList>
    </citation>
    <scope>NUCLEOTIDE SEQUENCE [GENOMIC RNA]</scope>
</reference>
<comment type="function">
    <text evidence="1">Plays a role in the inhibition of host innate immunity by inducing the degradation of key host factors required to activate interferon production such as IRF3, IRF5 or IRF7. Associates with components of cullin RING ligases (CRLs) including CUL1 or CUL3, which are essential multisubunit ubiquitination complexes, to modulate their activities. Recognizes the host NF-kappa-B regulator BTRC through the presence of a DSGXS motif in the C-terminal substrate recognition domain.</text>
</comment>
<comment type="subunit">
    <text evidence="1">Interacts (via C-terminus) with host IRF3; this interaction leads to IRF3 degradation. Interacts with host IRF7; this interaction leads to IRF7 degradation. Interacts with host CUL1 and CUL3. Interacts with host BTRC.</text>
</comment>
<comment type="subcellular location">
    <subcellularLocation>
        <location evidence="1">Host cytoplasm</location>
        <location evidence="1">Host cytoskeleton</location>
    </subcellularLocation>
</comment>
<comment type="domain">
    <text evidence="1">The integrity of the zinc-binding domain in NSP1 is important for degradation of host IRF3.</text>
</comment>
<comment type="domain">
    <text evidence="1">The pLxIS motif targets host IRF3 for degradation; however phosphorylation of NSP1 pLxIS motif is not required for its activity.</text>
</comment>
<comment type="PTM">
    <text evidence="1">The C-terminal region is phosphorylated by host CKII/CSNK2A1. Phosphorylation of the DSGXS motif is essential for host NF-kappa-B inhibition.</text>
</comment>
<comment type="similarity">
    <text evidence="1">Belongs to the rotavirus NSP1 family.</text>
</comment>
<dbReference type="EMBL" id="EF672571">
    <property type="protein sequence ID" value="ABV53245.1"/>
    <property type="molecule type" value="Genomic_RNA"/>
</dbReference>
<dbReference type="SMR" id="B3SRS0"/>
<dbReference type="Proteomes" id="UP000006368">
    <property type="component" value="Genome"/>
</dbReference>
<dbReference type="GO" id="GO:0030430">
    <property type="term" value="C:host cell cytoplasm"/>
    <property type="evidence" value="ECO:0007669"/>
    <property type="project" value="UniProtKB-UniRule"/>
</dbReference>
<dbReference type="GO" id="GO:0044163">
    <property type="term" value="C:host cytoskeleton"/>
    <property type="evidence" value="ECO:0007669"/>
    <property type="project" value="UniProtKB-SubCell"/>
</dbReference>
<dbReference type="GO" id="GO:0046872">
    <property type="term" value="F:metal ion binding"/>
    <property type="evidence" value="ECO:0007669"/>
    <property type="project" value="UniProtKB-UniRule"/>
</dbReference>
<dbReference type="GO" id="GO:0003723">
    <property type="term" value="F:RNA binding"/>
    <property type="evidence" value="ECO:0007669"/>
    <property type="project" value="UniProtKB-UniRule"/>
</dbReference>
<dbReference type="GO" id="GO:0039548">
    <property type="term" value="P:symbiont-mediated suppression of host cytoplasmic pattern recognition receptor signaling pathway via inhibition of IRF3 activity"/>
    <property type="evidence" value="ECO:0007669"/>
    <property type="project" value="UniProtKB-UniRule"/>
</dbReference>
<dbReference type="GO" id="GO:0039557">
    <property type="term" value="P:symbiont-mediated suppression of host cytoplasmic pattern recognition receptor signaling pathway via inhibition of IRF7 activity"/>
    <property type="evidence" value="ECO:0007669"/>
    <property type="project" value="UniProtKB-UniRule"/>
</dbReference>
<dbReference type="GO" id="GO:0085034">
    <property type="term" value="P:symbiont-mediated suppression of host NF-kappaB cascade"/>
    <property type="evidence" value="ECO:0007669"/>
    <property type="project" value="UniProtKB-UniRule"/>
</dbReference>
<dbReference type="HAMAP" id="MF_04088">
    <property type="entry name" value="ROTA_NSP1"/>
    <property type="match status" value="1"/>
</dbReference>
<dbReference type="InterPro" id="IPR002148">
    <property type="entry name" value="Rotavirus_NSP1"/>
</dbReference>
<dbReference type="Pfam" id="PF00981">
    <property type="entry name" value="Rota_NS53"/>
    <property type="match status" value="1"/>
</dbReference>
<protein>
    <recommendedName>
        <fullName evidence="1">Non-structural protein 1</fullName>
        <shortName evidence="1">NSP1</shortName>
    </recommendedName>
    <alternativeName>
        <fullName evidence="1">NCVP2</fullName>
    </alternativeName>
    <alternativeName>
        <fullName evidence="1">Non-structural RNA-binding protein 53</fullName>
        <shortName evidence="1">NS53</shortName>
    </alternativeName>
</protein>
<organism>
    <name type="scientific">Rotavirus A (strain RVA/Human/United States/D/1974/G1P1A[8])</name>
    <name type="common">RV-A</name>
    <dbReference type="NCBI Taxonomy" id="578831"/>
    <lineage>
        <taxon>Viruses</taxon>
        <taxon>Riboviria</taxon>
        <taxon>Orthornavirae</taxon>
        <taxon>Duplornaviricota</taxon>
        <taxon>Resentoviricetes</taxon>
        <taxon>Reovirales</taxon>
        <taxon>Sedoreoviridae</taxon>
        <taxon>Rotavirus</taxon>
        <taxon>Rotavirus A</taxon>
    </lineage>
</organism>
<evidence type="ECO:0000255" key="1">
    <source>
        <dbReference type="HAMAP-Rule" id="MF_04088"/>
    </source>
</evidence>
<proteinExistence type="inferred from homology"/>
<accession>B3SRS0</accession>
<keyword id="KW-1035">Host cytoplasm</keyword>
<keyword id="KW-1037">Host cytoskeleton</keyword>
<keyword id="KW-0945">Host-virus interaction</keyword>
<keyword id="KW-1090">Inhibition of host innate immune response by virus</keyword>
<keyword id="KW-1092">Inhibition of host IRF3 by virus</keyword>
<keyword id="KW-1093">Inhibition of host IRF7 by virus</keyword>
<keyword id="KW-1100">Inhibition of host NF-kappa-B by virus</keyword>
<keyword id="KW-1113">Inhibition of host RLR pathway by virus</keyword>
<keyword id="KW-0922">Interferon antiviral system evasion</keyword>
<keyword id="KW-0479">Metal-binding</keyword>
<keyword id="KW-0597">Phosphoprotein</keyword>
<keyword id="KW-1185">Reference proteome</keyword>
<keyword id="KW-0694">RNA-binding</keyword>
<keyword id="KW-0899">Viral immunoevasion</keyword>
<organismHost>
    <name type="scientific">Homo sapiens</name>
    <name type="common">Human</name>
    <dbReference type="NCBI Taxonomy" id="9606"/>
</organismHost>